<gene>
    <name evidence="1" type="primary">rplF</name>
    <name type="ordered locus">BRADO3081</name>
</gene>
<name>RL6_BRASO</name>
<proteinExistence type="inferred from homology"/>
<evidence type="ECO:0000255" key="1">
    <source>
        <dbReference type="HAMAP-Rule" id="MF_01365"/>
    </source>
</evidence>
<evidence type="ECO:0000305" key="2"/>
<accession>A4YSK7</accession>
<sequence length="177" mass="19308">MSRIGKKPVTVPSGVTATVDGQTVKMKGPKGQLQFLVHDDVEVKFENGQVKVAPRAETKRARSLYGTARAQIANLVEGVTKGFEKKLEITGVGYRAAMQGKNLQLALGYSHDVVYQIPEGITIAVPKPTEITITGIDPQRVGQVAAEIRAYRPPEPYKGKGVKYAGEFIFRKEGKKK</sequence>
<comment type="function">
    <text evidence="1">This protein binds to the 23S rRNA, and is important in its secondary structure. It is located near the subunit interface in the base of the L7/L12 stalk, and near the tRNA binding site of the peptidyltransferase center.</text>
</comment>
<comment type="subunit">
    <text evidence="1">Part of the 50S ribosomal subunit.</text>
</comment>
<comment type="similarity">
    <text evidence="1">Belongs to the universal ribosomal protein uL6 family.</text>
</comment>
<dbReference type="EMBL" id="CU234118">
    <property type="protein sequence ID" value="CAL76883.1"/>
    <property type="molecule type" value="Genomic_DNA"/>
</dbReference>
<dbReference type="RefSeq" id="WP_008963473.1">
    <property type="nucleotide sequence ID" value="NC_009445.1"/>
</dbReference>
<dbReference type="SMR" id="A4YSK7"/>
<dbReference type="STRING" id="114615.BRADO3081"/>
<dbReference type="KEGG" id="bra:BRADO3081"/>
<dbReference type="eggNOG" id="COG0097">
    <property type="taxonomic scope" value="Bacteria"/>
</dbReference>
<dbReference type="HOGENOM" id="CLU_065464_1_2_5"/>
<dbReference type="OrthoDB" id="9805007at2"/>
<dbReference type="Proteomes" id="UP000001994">
    <property type="component" value="Chromosome"/>
</dbReference>
<dbReference type="GO" id="GO:0022625">
    <property type="term" value="C:cytosolic large ribosomal subunit"/>
    <property type="evidence" value="ECO:0007669"/>
    <property type="project" value="TreeGrafter"/>
</dbReference>
<dbReference type="GO" id="GO:0019843">
    <property type="term" value="F:rRNA binding"/>
    <property type="evidence" value="ECO:0007669"/>
    <property type="project" value="UniProtKB-UniRule"/>
</dbReference>
<dbReference type="GO" id="GO:0003735">
    <property type="term" value="F:structural constituent of ribosome"/>
    <property type="evidence" value="ECO:0007669"/>
    <property type="project" value="InterPro"/>
</dbReference>
<dbReference type="GO" id="GO:0002181">
    <property type="term" value="P:cytoplasmic translation"/>
    <property type="evidence" value="ECO:0007669"/>
    <property type="project" value="TreeGrafter"/>
</dbReference>
<dbReference type="FunFam" id="3.90.930.12:FF:000001">
    <property type="entry name" value="50S ribosomal protein L6"/>
    <property type="match status" value="1"/>
</dbReference>
<dbReference type="FunFam" id="3.90.930.12:FF:000002">
    <property type="entry name" value="50S ribosomal protein L6"/>
    <property type="match status" value="1"/>
</dbReference>
<dbReference type="Gene3D" id="3.90.930.12">
    <property type="entry name" value="Ribosomal protein L6, alpha-beta domain"/>
    <property type="match status" value="2"/>
</dbReference>
<dbReference type="HAMAP" id="MF_01365_B">
    <property type="entry name" value="Ribosomal_uL6_B"/>
    <property type="match status" value="1"/>
</dbReference>
<dbReference type="InterPro" id="IPR000702">
    <property type="entry name" value="Ribosomal_uL6-like"/>
</dbReference>
<dbReference type="InterPro" id="IPR036789">
    <property type="entry name" value="Ribosomal_uL6-like_a/b-dom_sf"/>
</dbReference>
<dbReference type="InterPro" id="IPR020040">
    <property type="entry name" value="Ribosomal_uL6_a/b-dom"/>
</dbReference>
<dbReference type="InterPro" id="IPR019906">
    <property type="entry name" value="Ribosomal_uL6_bac-type"/>
</dbReference>
<dbReference type="InterPro" id="IPR002358">
    <property type="entry name" value="Ribosomal_uL6_CS"/>
</dbReference>
<dbReference type="NCBIfam" id="TIGR03654">
    <property type="entry name" value="L6_bact"/>
    <property type="match status" value="1"/>
</dbReference>
<dbReference type="PANTHER" id="PTHR11655">
    <property type="entry name" value="60S/50S RIBOSOMAL PROTEIN L6/L9"/>
    <property type="match status" value="1"/>
</dbReference>
<dbReference type="PANTHER" id="PTHR11655:SF14">
    <property type="entry name" value="LARGE RIBOSOMAL SUBUNIT PROTEIN UL6M"/>
    <property type="match status" value="1"/>
</dbReference>
<dbReference type="Pfam" id="PF00347">
    <property type="entry name" value="Ribosomal_L6"/>
    <property type="match status" value="2"/>
</dbReference>
<dbReference type="PIRSF" id="PIRSF002162">
    <property type="entry name" value="Ribosomal_L6"/>
    <property type="match status" value="1"/>
</dbReference>
<dbReference type="PRINTS" id="PR00059">
    <property type="entry name" value="RIBOSOMALL6"/>
</dbReference>
<dbReference type="SUPFAM" id="SSF56053">
    <property type="entry name" value="Ribosomal protein L6"/>
    <property type="match status" value="2"/>
</dbReference>
<dbReference type="PROSITE" id="PS00525">
    <property type="entry name" value="RIBOSOMAL_L6_1"/>
    <property type="match status" value="1"/>
</dbReference>
<reference key="1">
    <citation type="journal article" date="2007" name="Science">
        <title>Legumes symbioses: absence of nod genes in photosynthetic bradyrhizobia.</title>
        <authorList>
            <person name="Giraud E."/>
            <person name="Moulin L."/>
            <person name="Vallenet D."/>
            <person name="Barbe V."/>
            <person name="Cytryn E."/>
            <person name="Avarre J.-C."/>
            <person name="Jaubert M."/>
            <person name="Simon D."/>
            <person name="Cartieaux F."/>
            <person name="Prin Y."/>
            <person name="Bena G."/>
            <person name="Hannibal L."/>
            <person name="Fardoux J."/>
            <person name="Kojadinovic M."/>
            <person name="Vuillet L."/>
            <person name="Lajus A."/>
            <person name="Cruveiller S."/>
            <person name="Rouy Z."/>
            <person name="Mangenot S."/>
            <person name="Segurens B."/>
            <person name="Dossat C."/>
            <person name="Franck W.L."/>
            <person name="Chang W.-S."/>
            <person name="Saunders E."/>
            <person name="Bruce D."/>
            <person name="Richardson P."/>
            <person name="Normand P."/>
            <person name="Dreyfus B."/>
            <person name="Pignol D."/>
            <person name="Stacey G."/>
            <person name="Emerich D."/>
            <person name="Vermeglio A."/>
            <person name="Medigue C."/>
            <person name="Sadowsky M."/>
        </authorList>
    </citation>
    <scope>NUCLEOTIDE SEQUENCE [LARGE SCALE GENOMIC DNA]</scope>
    <source>
        <strain>ORS 278</strain>
    </source>
</reference>
<protein>
    <recommendedName>
        <fullName evidence="1">Large ribosomal subunit protein uL6</fullName>
    </recommendedName>
    <alternativeName>
        <fullName evidence="2">50S ribosomal protein L6</fullName>
    </alternativeName>
</protein>
<feature type="chain" id="PRO_1000055200" description="Large ribosomal subunit protein uL6">
    <location>
        <begin position="1"/>
        <end position="177"/>
    </location>
</feature>
<organism>
    <name type="scientific">Bradyrhizobium sp. (strain ORS 278)</name>
    <dbReference type="NCBI Taxonomy" id="114615"/>
    <lineage>
        <taxon>Bacteria</taxon>
        <taxon>Pseudomonadati</taxon>
        <taxon>Pseudomonadota</taxon>
        <taxon>Alphaproteobacteria</taxon>
        <taxon>Hyphomicrobiales</taxon>
        <taxon>Nitrobacteraceae</taxon>
        <taxon>Bradyrhizobium</taxon>
    </lineage>
</organism>
<keyword id="KW-1185">Reference proteome</keyword>
<keyword id="KW-0687">Ribonucleoprotein</keyword>
<keyword id="KW-0689">Ribosomal protein</keyword>
<keyword id="KW-0694">RNA-binding</keyword>
<keyword id="KW-0699">rRNA-binding</keyword>